<evidence type="ECO:0000255" key="1">
    <source>
        <dbReference type="HAMAP-Rule" id="MF_01043"/>
    </source>
</evidence>
<comment type="function">
    <text evidence="1">Catalyzes the transfer of an acyl group from acyl-ACP to glycerol-3-phosphate (G3P) to form lysophosphatidic acid (LPA). This enzyme can also utilize acyl-CoA as fatty acyl donor, but not acyl-PO(4).</text>
</comment>
<comment type="catalytic activity">
    <reaction evidence="1">
        <text>sn-glycerol 3-phosphate + an acyl-CoA = a 1-acyl-sn-glycero-3-phosphate + CoA</text>
        <dbReference type="Rhea" id="RHEA:15325"/>
        <dbReference type="ChEBI" id="CHEBI:57287"/>
        <dbReference type="ChEBI" id="CHEBI:57597"/>
        <dbReference type="ChEBI" id="CHEBI:57970"/>
        <dbReference type="ChEBI" id="CHEBI:58342"/>
        <dbReference type="EC" id="2.3.1.15"/>
    </reaction>
</comment>
<comment type="catalytic activity">
    <reaction evidence="1">
        <text>a fatty acyl-[ACP] + sn-glycerol 3-phosphate = a 1-acyl-sn-glycero-3-phosphate + holo-[ACP]</text>
        <dbReference type="Rhea" id="RHEA:42300"/>
        <dbReference type="Rhea" id="RHEA-COMP:9685"/>
        <dbReference type="Rhea" id="RHEA-COMP:14125"/>
        <dbReference type="ChEBI" id="CHEBI:57597"/>
        <dbReference type="ChEBI" id="CHEBI:57970"/>
        <dbReference type="ChEBI" id="CHEBI:64479"/>
        <dbReference type="ChEBI" id="CHEBI:138651"/>
        <dbReference type="EC" id="2.3.1.n5"/>
    </reaction>
</comment>
<comment type="pathway">
    <text evidence="1">Lipid metabolism; phospholipid metabolism.</text>
</comment>
<comment type="subunit">
    <text evidence="1">Probably interacts with PlsX.</text>
</comment>
<comment type="subcellular location">
    <subcellularLocation>
        <location evidence="1">Cell inner membrane</location>
        <topology evidence="1">Multi-pass membrane protein</topology>
    </subcellularLocation>
</comment>
<comment type="similarity">
    <text evidence="1">Belongs to the PlsY family.</text>
</comment>
<keyword id="KW-0997">Cell inner membrane</keyword>
<keyword id="KW-1003">Cell membrane</keyword>
<keyword id="KW-0444">Lipid biosynthesis</keyword>
<keyword id="KW-0443">Lipid metabolism</keyword>
<keyword id="KW-0472">Membrane</keyword>
<keyword id="KW-0594">Phospholipid biosynthesis</keyword>
<keyword id="KW-1208">Phospholipid metabolism</keyword>
<keyword id="KW-0808">Transferase</keyword>
<keyword id="KW-0812">Transmembrane</keyword>
<keyword id="KW-1133">Transmembrane helix</keyword>
<proteinExistence type="inferred from homology"/>
<sequence>MSAIAPGMILIAYLCGSISSAILVCRLCGLPDPRTSGSGNPGATNVLRIGGKGAAVAVLIFDVLKGMLPVWGAYELGVSPFWLGLIAIAACLGHIWPVFFGFKGGKGVATAFGAIAPIGWDLTGVMAGTWLLTVLLSGYSSLGAIVSALIAPFYVWWFKPQFTFPVSMLSCLILLRHHDNIQRLWRRQETKIWTKFKRKREKDPE</sequence>
<accession>B7ND48</accession>
<reference key="1">
    <citation type="journal article" date="2009" name="PLoS Genet.">
        <title>Organised genome dynamics in the Escherichia coli species results in highly diverse adaptive paths.</title>
        <authorList>
            <person name="Touchon M."/>
            <person name="Hoede C."/>
            <person name="Tenaillon O."/>
            <person name="Barbe V."/>
            <person name="Baeriswyl S."/>
            <person name="Bidet P."/>
            <person name="Bingen E."/>
            <person name="Bonacorsi S."/>
            <person name="Bouchier C."/>
            <person name="Bouvet O."/>
            <person name="Calteau A."/>
            <person name="Chiapello H."/>
            <person name="Clermont O."/>
            <person name="Cruveiller S."/>
            <person name="Danchin A."/>
            <person name="Diard M."/>
            <person name="Dossat C."/>
            <person name="Karoui M.E."/>
            <person name="Frapy E."/>
            <person name="Garry L."/>
            <person name="Ghigo J.M."/>
            <person name="Gilles A.M."/>
            <person name="Johnson J."/>
            <person name="Le Bouguenec C."/>
            <person name="Lescat M."/>
            <person name="Mangenot S."/>
            <person name="Martinez-Jehanne V."/>
            <person name="Matic I."/>
            <person name="Nassif X."/>
            <person name="Oztas S."/>
            <person name="Petit M.A."/>
            <person name="Pichon C."/>
            <person name="Rouy Z."/>
            <person name="Ruf C.S."/>
            <person name="Schneider D."/>
            <person name="Tourret J."/>
            <person name="Vacherie B."/>
            <person name="Vallenet D."/>
            <person name="Medigue C."/>
            <person name="Rocha E.P.C."/>
            <person name="Denamur E."/>
        </authorList>
    </citation>
    <scope>NUCLEOTIDE SEQUENCE [LARGE SCALE GENOMIC DNA]</scope>
    <source>
        <strain>UMN026 / ExPEC</strain>
    </source>
</reference>
<organism>
    <name type="scientific">Escherichia coli O17:K52:H18 (strain UMN026 / ExPEC)</name>
    <dbReference type="NCBI Taxonomy" id="585056"/>
    <lineage>
        <taxon>Bacteria</taxon>
        <taxon>Pseudomonadati</taxon>
        <taxon>Pseudomonadota</taxon>
        <taxon>Gammaproteobacteria</taxon>
        <taxon>Enterobacterales</taxon>
        <taxon>Enterobacteriaceae</taxon>
        <taxon>Escherichia</taxon>
    </lineage>
</organism>
<gene>
    <name evidence="1" type="primary">plsY</name>
    <name type="synonym">ygiH</name>
    <name type="ordered locus">ECUMN_3542</name>
</gene>
<feature type="chain" id="PRO_1000136086" description="Glycerol-3-phosphate acyltransferase">
    <location>
        <begin position="1"/>
        <end position="205"/>
    </location>
</feature>
<feature type="topological domain" description="Periplasmic" evidence="1">
    <location>
        <begin position="1"/>
        <end position="3"/>
    </location>
</feature>
<feature type="transmembrane region" description="Helical" evidence="1">
    <location>
        <begin position="4"/>
        <end position="24"/>
    </location>
</feature>
<feature type="topological domain" description="Cytoplasmic" evidence="1">
    <location>
        <begin position="25"/>
        <end position="52"/>
    </location>
</feature>
<feature type="transmembrane region" description="Helical" evidence="1">
    <location>
        <begin position="53"/>
        <end position="73"/>
    </location>
</feature>
<feature type="topological domain" description="Periplasmic" evidence="1">
    <location>
        <begin position="74"/>
        <end position="80"/>
    </location>
</feature>
<feature type="transmembrane region" description="Helical" evidence="1">
    <location>
        <begin position="81"/>
        <end position="101"/>
    </location>
</feature>
<feature type="topological domain" description="Cytoplasmic" evidence="1">
    <location>
        <begin position="102"/>
        <end position="111"/>
    </location>
</feature>
<feature type="transmembrane region" description="Helical" evidence="1">
    <location>
        <begin position="112"/>
        <end position="132"/>
    </location>
</feature>
<feature type="topological domain" description="Periplasmic" evidence="1">
    <location>
        <begin position="133"/>
        <end position="137"/>
    </location>
</feature>
<feature type="transmembrane region" description="Helical" evidence="1">
    <location>
        <begin position="138"/>
        <end position="158"/>
    </location>
</feature>
<feature type="topological domain" description="Cytoplasmic" evidence="1">
    <location>
        <begin position="159"/>
        <end position="205"/>
    </location>
</feature>
<dbReference type="EC" id="2.3.1.15" evidence="1"/>
<dbReference type="EC" id="2.3.1.n5" evidence="1"/>
<dbReference type="EMBL" id="CU928163">
    <property type="protein sequence ID" value="CAR14698.1"/>
    <property type="molecule type" value="Genomic_DNA"/>
</dbReference>
<dbReference type="RefSeq" id="WP_001272796.1">
    <property type="nucleotide sequence ID" value="NC_011751.1"/>
</dbReference>
<dbReference type="RefSeq" id="YP_002414203.1">
    <property type="nucleotide sequence ID" value="NC_011751.1"/>
</dbReference>
<dbReference type="SMR" id="B7ND48"/>
<dbReference type="STRING" id="585056.ECUMN_3542"/>
<dbReference type="GeneID" id="93778934"/>
<dbReference type="KEGG" id="eum:ECUMN_3542"/>
<dbReference type="PATRIC" id="fig|585056.7.peg.3716"/>
<dbReference type="HOGENOM" id="CLU_081254_0_2_6"/>
<dbReference type="UniPathway" id="UPA00085"/>
<dbReference type="Proteomes" id="UP000007097">
    <property type="component" value="Chromosome"/>
</dbReference>
<dbReference type="GO" id="GO:0005886">
    <property type="term" value="C:plasma membrane"/>
    <property type="evidence" value="ECO:0007669"/>
    <property type="project" value="UniProtKB-SubCell"/>
</dbReference>
<dbReference type="GO" id="GO:0043772">
    <property type="term" value="F:acyl-phosphate glycerol-3-phosphate acyltransferase activity"/>
    <property type="evidence" value="ECO:0007669"/>
    <property type="project" value="InterPro"/>
</dbReference>
<dbReference type="GO" id="GO:0004366">
    <property type="term" value="F:glycerol-3-phosphate O-acyltransferase activity"/>
    <property type="evidence" value="ECO:0007669"/>
    <property type="project" value="UniProtKB-UniRule"/>
</dbReference>
<dbReference type="GO" id="GO:0008654">
    <property type="term" value="P:phospholipid biosynthetic process"/>
    <property type="evidence" value="ECO:0007669"/>
    <property type="project" value="UniProtKB-UniRule"/>
</dbReference>
<dbReference type="HAMAP" id="MF_01043">
    <property type="entry name" value="PlsY"/>
    <property type="match status" value="1"/>
</dbReference>
<dbReference type="InterPro" id="IPR003811">
    <property type="entry name" value="G3P_acylTferase_PlsY"/>
</dbReference>
<dbReference type="NCBIfam" id="TIGR00023">
    <property type="entry name" value="glycerol-3-phosphate 1-O-acyltransferase PlsY"/>
    <property type="match status" value="1"/>
</dbReference>
<dbReference type="PANTHER" id="PTHR30309:SF0">
    <property type="entry name" value="GLYCEROL-3-PHOSPHATE ACYLTRANSFERASE-RELATED"/>
    <property type="match status" value="1"/>
</dbReference>
<dbReference type="PANTHER" id="PTHR30309">
    <property type="entry name" value="INNER MEMBRANE PROTEIN YGIH"/>
    <property type="match status" value="1"/>
</dbReference>
<dbReference type="Pfam" id="PF02660">
    <property type="entry name" value="G3P_acyltransf"/>
    <property type="match status" value="1"/>
</dbReference>
<dbReference type="SMART" id="SM01207">
    <property type="entry name" value="G3P_acyltransf"/>
    <property type="match status" value="1"/>
</dbReference>
<protein>
    <recommendedName>
        <fullName evidence="1">Glycerol-3-phosphate acyltransferase</fullName>
    </recommendedName>
    <alternativeName>
        <fullName evidence="1">G3P acyltransferase</fullName>
        <shortName evidence="1">GPAT</shortName>
        <ecNumber evidence="1">2.3.1.15</ecNumber>
        <ecNumber evidence="1">2.3.1.n5</ecNumber>
    </alternativeName>
    <alternativeName>
        <fullName evidence="1">Lysophosphatidic acid synthase</fullName>
        <shortName evidence="1">LPA synthase</shortName>
    </alternativeName>
</protein>
<name>PLSY_ECOLU</name>